<sequence>MNKQIQTEADELGFFGEYGGQYVPETLMPAIIELKKAYKEAKADPEFQRELEYYLSEYVGRATPLTYAASYTESLGGAKIYLKREDLNHTGAHKINNALGQALLAKRMGKKKLVAETGAGQHGVASATVAALFDMELVVFMGSEDIKRQQLNVFRMELLGAKVVAVEEGQGTLSDAVNKALQYWVSHVDDTHYLLGSALGPDPFPTIVRDFQSVIGKEIKSQILKKEGRLPDAIVACIGGGSNAIGTFYPFIKDDVALYGVEAAGQGEDTDKHALAIGKGSPGVLHGTKMYLIQDEGGQVQLAHSISAGLDYPGIGPEHSYYHDIGRVTFENASDTQAMNALINFTKHEGIIPAIESAHALSYVERLAPTMSKEDIIVVTISGRGDKDMETIRQYMAERGLAND</sequence>
<organism>
    <name type="scientific">Staphylococcus aureus (strain JH9)</name>
    <dbReference type="NCBI Taxonomy" id="359786"/>
    <lineage>
        <taxon>Bacteria</taxon>
        <taxon>Bacillati</taxon>
        <taxon>Bacillota</taxon>
        <taxon>Bacilli</taxon>
        <taxon>Bacillales</taxon>
        <taxon>Staphylococcaceae</taxon>
        <taxon>Staphylococcus</taxon>
    </lineage>
</organism>
<keyword id="KW-0028">Amino-acid biosynthesis</keyword>
<keyword id="KW-0057">Aromatic amino acid biosynthesis</keyword>
<keyword id="KW-0456">Lyase</keyword>
<keyword id="KW-0663">Pyridoxal phosphate</keyword>
<keyword id="KW-0822">Tryptophan biosynthesis</keyword>
<protein>
    <recommendedName>
        <fullName evidence="1">Tryptophan synthase beta chain</fullName>
        <ecNumber evidence="1">4.2.1.20</ecNumber>
    </recommendedName>
</protein>
<name>TRPB_STAA9</name>
<proteinExistence type="inferred from homology"/>
<feature type="chain" id="PRO_1000076410" description="Tryptophan synthase beta chain">
    <location>
        <begin position="1"/>
        <end position="404"/>
    </location>
</feature>
<feature type="modified residue" description="N6-(pyridoxal phosphate)lysine" evidence="1">
    <location>
        <position position="94"/>
    </location>
</feature>
<reference key="1">
    <citation type="submission" date="2007-05" db="EMBL/GenBank/DDBJ databases">
        <title>Complete sequence of chromosome of Staphylococcus aureus subsp. aureus JH9.</title>
        <authorList>
            <consortium name="US DOE Joint Genome Institute"/>
            <person name="Copeland A."/>
            <person name="Lucas S."/>
            <person name="Lapidus A."/>
            <person name="Barry K."/>
            <person name="Detter J.C."/>
            <person name="Glavina del Rio T."/>
            <person name="Hammon N."/>
            <person name="Israni S."/>
            <person name="Pitluck S."/>
            <person name="Chain P."/>
            <person name="Malfatti S."/>
            <person name="Shin M."/>
            <person name="Vergez L."/>
            <person name="Schmutz J."/>
            <person name="Larimer F."/>
            <person name="Land M."/>
            <person name="Hauser L."/>
            <person name="Kyrpides N."/>
            <person name="Kim E."/>
            <person name="Tomasz A."/>
            <person name="Richardson P."/>
        </authorList>
    </citation>
    <scope>NUCLEOTIDE SEQUENCE [LARGE SCALE GENOMIC DNA]</scope>
    <source>
        <strain>JH9</strain>
    </source>
</reference>
<evidence type="ECO:0000255" key="1">
    <source>
        <dbReference type="HAMAP-Rule" id="MF_00133"/>
    </source>
</evidence>
<comment type="function">
    <text evidence="1">The beta subunit is responsible for the synthesis of L-tryptophan from indole and L-serine.</text>
</comment>
<comment type="catalytic activity">
    <reaction evidence="1">
        <text>(1S,2R)-1-C-(indol-3-yl)glycerol 3-phosphate + L-serine = D-glyceraldehyde 3-phosphate + L-tryptophan + H2O</text>
        <dbReference type="Rhea" id="RHEA:10532"/>
        <dbReference type="ChEBI" id="CHEBI:15377"/>
        <dbReference type="ChEBI" id="CHEBI:33384"/>
        <dbReference type="ChEBI" id="CHEBI:57912"/>
        <dbReference type="ChEBI" id="CHEBI:58866"/>
        <dbReference type="ChEBI" id="CHEBI:59776"/>
        <dbReference type="EC" id="4.2.1.20"/>
    </reaction>
</comment>
<comment type="cofactor">
    <cofactor evidence="1">
        <name>pyridoxal 5'-phosphate</name>
        <dbReference type="ChEBI" id="CHEBI:597326"/>
    </cofactor>
</comment>
<comment type="pathway">
    <text evidence="1">Amino-acid biosynthesis; L-tryptophan biosynthesis; L-tryptophan from chorismate: step 5/5.</text>
</comment>
<comment type="subunit">
    <text evidence="1">Tetramer of two alpha and two beta chains.</text>
</comment>
<comment type="similarity">
    <text evidence="1">Belongs to the TrpB family.</text>
</comment>
<gene>
    <name evidence="1" type="primary">trpB</name>
    <name type="ordered locus">SaurJH9_1433</name>
</gene>
<dbReference type="EC" id="4.2.1.20" evidence="1"/>
<dbReference type="EMBL" id="CP000703">
    <property type="protein sequence ID" value="ABQ49227.1"/>
    <property type="molecule type" value="Genomic_DNA"/>
</dbReference>
<dbReference type="RefSeq" id="WP_001041351.1">
    <property type="nucleotide sequence ID" value="NC_009487.1"/>
</dbReference>
<dbReference type="SMR" id="A5ISQ4"/>
<dbReference type="KEGG" id="saj:SaurJH9_1433"/>
<dbReference type="HOGENOM" id="CLU_016734_3_1_9"/>
<dbReference type="UniPathway" id="UPA00035">
    <property type="reaction ID" value="UER00044"/>
</dbReference>
<dbReference type="GO" id="GO:0005737">
    <property type="term" value="C:cytoplasm"/>
    <property type="evidence" value="ECO:0007669"/>
    <property type="project" value="TreeGrafter"/>
</dbReference>
<dbReference type="GO" id="GO:0004834">
    <property type="term" value="F:tryptophan synthase activity"/>
    <property type="evidence" value="ECO:0007669"/>
    <property type="project" value="UniProtKB-UniRule"/>
</dbReference>
<dbReference type="CDD" id="cd06446">
    <property type="entry name" value="Trp-synth_B"/>
    <property type="match status" value="1"/>
</dbReference>
<dbReference type="FunFam" id="3.40.50.1100:FF:000001">
    <property type="entry name" value="Tryptophan synthase beta chain"/>
    <property type="match status" value="1"/>
</dbReference>
<dbReference type="FunFam" id="3.40.50.1100:FF:000004">
    <property type="entry name" value="Tryptophan synthase beta chain"/>
    <property type="match status" value="1"/>
</dbReference>
<dbReference type="Gene3D" id="3.40.50.1100">
    <property type="match status" value="2"/>
</dbReference>
<dbReference type="HAMAP" id="MF_00133">
    <property type="entry name" value="Trp_synth_beta"/>
    <property type="match status" value="1"/>
</dbReference>
<dbReference type="InterPro" id="IPR006653">
    <property type="entry name" value="Trp_synth_b_CS"/>
</dbReference>
<dbReference type="InterPro" id="IPR006654">
    <property type="entry name" value="Trp_synth_beta"/>
</dbReference>
<dbReference type="InterPro" id="IPR023026">
    <property type="entry name" value="Trp_synth_beta/beta-like"/>
</dbReference>
<dbReference type="InterPro" id="IPR001926">
    <property type="entry name" value="TrpB-like_PALP"/>
</dbReference>
<dbReference type="InterPro" id="IPR036052">
    <property type="entry name" value="TrpB-like_PALP_sf"/>
</dbReference>
<dbReference type="NCBIfam" id="TIGR00263">
    <property type="entry name" value="trpB"/>
    <property type="match status" value="1"/>
</dbReference>
<dbReference type="PANTHER" id="PTHR48077:SF3">
    <property type="entry name" value="TRYPTOPHAN SYNTHASE"/>
    <property type="match status" value="1"/>
</dbReference>
<dbReference type="PANTHER" id="PTHR48077">
    <property type="entry name" value="TRYPTOPHAN SYNTHASE-RELATED"/>
    <property type="match status" value="1"/>
</dbReference>
<dbReference type="Pfam" id="PF00291">
    <property type="entry name" value="PALP"/>
    <property type="match status" value="1"/>
</dbReference>
<dbReference type="PIRSF" id="PIRSF001413">
    <property type="entry name" value="Trp_syn_beta"/>
    <property type="match status" value="1"/>
</dbReference>
<dbReference type="SUPFAM" id="SSF53686">
    <property type="entry name" value="Tryptophan synthase beta subunit-like PLP-dependent enzymes"/>
    <property type="match status" value="1"/>
</dbReference>
<dbReference type="PROSITE" id="PS00168">
    <property type="entry name" value="TRP_SYNTHASE_BETA"/>
    <property type="match status" value="1"/>
</dbReference>
<accession>A5ISQ4</accession>